<protein>
    <recommendedName>
        <fullName>DNA-binding response regulator MtrA</fullName>
    </recommendedName>
</protein>
<comment type="function">
    <text evidence="1">Member of the two-component regulatory system MtrA/MtrB.</text>
</comment>
<comment type="PTM">
    <text evidence="4">Phosphorylated by MtrB.</text>
</comment>
<comment type="sequence caution" evidence="4">
    <conflict type="erroneous initiation">
        <sequence resource="EMBL-CDS" id="CAC30282"/>
    </conflict>
</comment>
<gene>
    <name type="primary">mtrA</name>
    <name type="ordered locus">ML0773</name>
</gene>
<evidence type="ECO:0000250" key="1"/>
<evidence type="ECO:0000255" key="2">
    <source>
        <dbReference type="PROSITE-ProRule" id="PRU00169"/>
    </source>
</evidence>
<evidence type="ECO:0000255" key="3">
    <source>
        <dbReference type="PROSITE-ProRule" id="PRU01091"/>
    </source>
</evidence>
<evidence type="ECO:0000305" key="4"/>
<keyword id="KW-0238">DNA-binding</keyword>
<keyword id="KW-0597">Phosphoprotein</keyword>
<keyword id="KW-1185">Reference proteome</keyword>
<keyword id="KW-0804">Transcription</keyword>
<keyword id="KW-0805">Transcription regulation</keyword>
<keyword id="KW-0902">Two-component regulatory system</keyword>
<feature type="chain" id="PRO_0000081141" description="DNA-binding response regulator MtrA">
    <location>
        <begin position="1"/>
        <end position="225"/>
    </location>
</feature>
<feature type="domain" description="Response regulatory" evidence="2">
    <location>
        <begin position="4"/>
        <end position="117"/>
    </location>
</feature>
<feature type="DNA-binding region" description="OmpR/PhoB-type" evidence="3">
    <location>
        <begin position="125"/>
        <end position="224"/>
    </location>
</feature>
<feature type="modified residue" description="4-aspartylphosphate" evidence="2">
    <location>
        <position position="53"/>
    </location>
</feature>
<sequence>MRQRILVVDDDASLAEMLTIVLRGEGFDTAVIGDGTQALTAVRELRPDLVLLDLMLPGMNGIDVCRVLRADSGVPIVMLTAKTDTVDVVLGLESGADDYIMKPFKPKELVARVRARLRRNDDEPAEMLSIADVDIDVPAHKVTRNGEHISLTPLEFDLLVALARKPRQVFTRDVLLEQVWGYRHPADTRLVNVHVQRLRAKVEKDPENPTVVLTVRGVGYKAGPP</sequence>
<reference key="1">
    <citation type="journal article" date="2001" name="Nature">
        <title>Massive gene decay in the leprosy bacillus.</title>
        <authorList>
            <person name="Cole S.T."/>
            <person name="Eiglmeier K."/>
            <person name="Parkhill J."/>
            <person name="James K.D."/>
            <person name="Thomson N.R."/>
            <person name="Wheeler P.R."/>
            <person name="Honore N."/>
            <person name="Garnier T."/>
            <person name="Churcher C.M."/>
            <person name="Harris D.E."/>
            <person name="Mungall K.L."/>
            <person name="Basham D."/>
            <person name="Brown D."/>
            <person name="Chillingworth T."/>
            <person name="Connor R."/>
            <person name="Davies R.M."/>
            <person name="Devlin K."/>
            <person name="Duthoy S."/>
            <person name="Feltwell T."/>
            <person name="Fraser A."/>
            <person name="Hamlin N."/>
            <person name="Holroyd S."/>
            <person name="Hornsby T."/>
            <person name="Jagels K."/>
            <person name="Lacroix C."/>
            <person name="Maclean J."/>
            <person name="Moule S."/>
            <person name="Murphy L.D."/>
            <person name="Oliver K."/>
            <person name="Quail M.A."/>
            <person name="Rajandream M.A."/>
            <person name="Rutherford K.M."/>
            <person name="Rutter S."/>
            <person name="Seeger K."/>
            <person name="Simon S."/>
            <person name="Simmonds M."/>
            <person name="Skelton J."/>
            <person name="Squares R."/>
            <person name="Squares S."/>
            <person name="Stevens K."/>
            <person name="Taylor K."/>
            <person name="Whitehead S."/>
            <person name="Woodward J.R."/>
            <person name="Barrell B.G."/>
        </authorList>
    </citation>
    <scope>NUCLEOTIDE SEQUENCE [LARGE SCALE GENOMIC DNA]</scope>
    <source>
        <strain>TN</strain>
    </source>
</reference>
<proteinExistence type="inferred from homology"/>
<organism>
    <name type="scientific">Mycobacterium leprae (strain TN)</name>
    <dbReference type="NCBI Taxonomy" id="272631"/>
    <lineage>
        <taxon>Bacteria</taxon>
        <taxon>Bacillati</taxon>
        <taxon>Actinomycetota</taxon>
        <taxon>Actinomycetes</taxon>
        <taxon>Mycobacteriales</taxon>
        <taxon>Mycobacteriaceae</taxon>
        <taxon>Mycobacterium</taxon>
    </lineage>
</organism>
<accession>Q9CCJ2</accession>
<name>MTRA_MYCLE</name>
<dbReference type="EMBL" id="AL583919">
    <property type="protein sequence ID" value="CAC30282.1"/>
    <property type="status" value="ALT_INIT"/>
    <property type="molecule type" value="Genomic_DNA"/>
</dbReference>
<dbReference type="PIR" id="F87005">
    <property type="entry name" value="F87005"/>
</dbReference>
<dbReference type="RefSeq" id="WP_010907921.1">
    <property type="nucleotide sequence ID" value="NC_002677.1"/>
</dbReference>
<dbReference type="SMR" id="Q9CCJ2"/>
<dbReference type="STRING" id="272631.gene:17574597"/>
<dbReference type="KEGG" id="mle:ML0773"/>
<dbReference type="Leproma" id="ML0773"/>
<dbReference type="eggNOG" id="COG0745">
    <property type="taxonomic scope" value="Bacteria"/>
</dbReference>
<dbReference type="HOGENOM" id="CLU_000445_30_4_11"/>
<dbReference type="Proteomes" id="UP000000806">
    <property type="component" value="Chromosome"/>
</dbReference>
<dbReference type="GO" id="GO:0005829">
    <property type="term" value="C:cytosol"/>
    <property type="evidence" value="ECO:0007669"/>
    <property type="project" value="TreeGrafter"/>
</dbReference>
<dbReference type="GO" id="GO:0032993">
    <property type="term" value="C:protein-DNA complex"/>
    <property type="evidence" value="ECO:0007669"/>
    <property type="project" value="TreeGrafter"/>
</dbReference>
<dbReference type="GO" id="GO:0000156">
    <property type="term" value="F:phosphorelay response regulator activity"/>
    <property type="evidence" value="ECO:0007669"/>
    <property type="project" value="InterPro"/>
</dbReference>
<dbReference type="GO" id="GO:0000976">
    <property type="term" value="F:transcription cis-regulatory region binding"/>
    <property type="evidence" value="ECO:0007669"/>
    <property type="project" value="InterPro"/>
</dbReference>
<dbReference type="GO" id="GO:0045893">
    <property type="term" value="P:positive regulation of DNA-templated transcription"/>
    <property type="evidence" value="ECO:0007669"/>
    <property type="project" value="InterPro"/>
</dbReference>
<dbReference type="CDD" id="cd17626">
    <property type="entry name" value="REC_OmpR_MtrA-like"/>
    <property type="match status" value="1"/>
</dbReference>
<dbReference type="CDD" id="cd00383">
    <property type="entry name" value="trans_reg_C"/>
    <property type="match status" value="1"/>
</dbReference>
<dbReference type="FunFam" id="1.10.10.10:FF:000033">
    <property type="entry name" value="DNA-binding response regulator MtrA"/>
    <property type="match status" value="1"/>
</dbReference>
<dbReference type="FunFam" id="3.40.50.2300:FF:000001">
    <property type="entry name" value="DNA-binding response regulator PhoB"/>
    <property type="match status" value="1"/>
</dbReference>
<dbReference type="Gene3D" id="3.40.50.2300">
    <property type="match status" value="1"/>
</dbReference>
<dbReference type="Gene3D" id="6.10.250.690">
    <property type="match status" value="1"/>
</dbReference>
<dbReference type="Gene3D" id="1.10.10.10">
    <property type="entry name" value="Winged helix-like DNA-binding domain superfamily/Winged helix DNA-binding domain"/>
    <property type="match status" value="1"/>
</dbReference>
<dbReference type="InterPro" id="IPR011006">
    <property type="entry name" value="CheY-like_superfamily"/>
</dbReference>
<dbReference type="InterPro" id="IPR047673">
    <property type="entry name" value="MtrA_REC"/>
</dbReference>
<dbReference type="InterPro" id="IPR047671">
    <property type="entry name" value="MtrAB_MtrA"/>
</dbReference>
<dbReference type="InterPro" id="IPR001867">
    <property type="entry name" value="OmpR/PhoB-type_DNA-bd"/>
</dbReference>
<dbReference type="InterPro" id="IPR001789">
    <property type="entry name" value="Sig_transdc_resp-reg_receiver"/>
</dbReference>
<dbReference type="InterPro" id="IPR039420">
    <property type="entry name" value="WalR-like"/>
</dbReference>
<dbReference type="InterPro" id="IPR036388">
    <property type="entry name" value="WH-like_DNA-bd_sf"/>
</dbReference>
<dbReference type="NCBIfam" id="NF040689">
    <property type="entry name" value="MtrAB_MtrA"/>
    <property type="match status" value="1"/>
</dbReference>
<dbReference type="PANTHER" id="PTHR48111:SF21">
    <property type="entry name" value="DNA-BINDING DUAL MASTER TRANSCRIPTIONAL REGULATOR RPAA"/>
    <property type="match status" value="1"/>
</dbReference>
<dbReference type="PANTHER" id="PTHR48111">
    <property type="entry name" value="REGULATOR OF RPOS"/>
    <property type="match status" value="1"/>
</dbReference>
<dbReference type="Pfam" id="PF00072">
    <property type="entry name" value="Response_reg"/>
    <property type="match status" value="1"/>
</dbReference>
<dbReference type="Pfam" id="PF00486">
    <property type="entry name" value="Trans_reg_C"/>
    <property type="match status" value="1"/>
</dbReference>
<dbReference type="SMART" id="SM00448">
    <property type="entry name" value="REC"/>
    <property type="match status" value="1"/>
</dbReference>
<dbReference type="SMART" id="SM00862">
    <property type="entry name" value="Trans_reg_C"/>
    <property type="match status" value="1"/>
</dbReference>
<dbReference type="SUPFAM" id="SSF52172">
    <property type="entry name" value="CheY-like"/>
    <property type="match status" value="1"/>
</dbReference>
<dbReference type="PROSITE" id="PS51755">
    <property type="entry name" value="OMPR_PHOB"/>
    <property type="match status" value="1"/>
</dbReference>
<dbReference type="PROSITE" id="PS50110">
    <property type="entry name" value="RESPONSE_REGULATORY"/>
    <property type="match status" value="1"/>
</dbReference>